<evidence type="ECO:0000250" key="1"/>
<evidence type="ECO:0000256" key="2">
    <source>
        <dbReference type="SAM" id="MobiDB-lite"/>
    </source>
</evidence>
<evidence type="ECO:0000305" key="3"/>
<feature type="chain" id="PRO_0000204625" description="Nuclear transcription factor Y subunit B">
    <location>
        <begin position="1"/>
        <end position="179"/>
    </location>
</feature>
<feature type="DNA-binding region" evidence="1">
    <location>
        <begin position="36"/>
        <end position="42"/>
    </location>
</feature>
<feature type="region of interest" description="Disordered" evidence="2">
    <location>
        <begin position="1"/>
        <end position="32"/>
    </location>
</feature>
<feature type="region of interest" description="Subunit association domain (SAD)" evidence="1">
    <location>
        <begin position="63"/>
        <end position="74"/>
    </location>
</feature>
<feature type="region of interest" description="Disordered" evidence="2">
    <location>
        <begin position="147"/>
        <end position="179"/>
    </location>
</feature>
<feature type="compositionally biased region" description="Gly residues" evidence="2">
    <location>
        <begin position="8"/>
        <end position="28"/>
    </location>
</feature>
<accession>P25209</accession>
<sequence>MAEAPASPGGGGGSHESGSPRGGGGGGSVREQDRFLPIANISRIMKKAIPANGKIAKDAKETVQECVSEFISFITSEASDKCQREKRKTINGDDLLWAMATLGFEDYIEPLKVYLQKYREMEGDSKLTAKSSDGSIKKDALGHVGASSSAAEGMGQQGAYNQGMGYMQPQYHNGDISNV</sequence>
<organism>
    <name type="scientific">Zea mays</name>
    <name type="common">Maize</name>
    <dbReference type="NCBI Taxonomy" id="4577"/>
    <lineage>
        <taxon>Eukaryota</taxon>
        <taxon>Viridiplantae</taxon>
        <taxon>Streptophyta</taxon>
        <taxon>Embryophyta</taxon>
        <taxon>Tracheophyta</taxon>
        <taxon>Spermatophyta</taxon>
        <taxon>Magnoliopsida</taxon>
        <taxon>Liliopsida</taxon>
        <taxon>Poales</taxon>
        <taxon>Poaceae</taxon>
        <taxon>PACMAD clade</taxon>
        <taxon>Panicoideae</taxon>
        <taxon>Andropogonodae</taxon>
        <taxon>Andropogoneae</taxon>
        <taxon>Tripsacinae</taxon>
        <taxon>Zea</taxon>
    </lineage>
</organism>
<reference key="1">
    <citation type="journal article" date="1992" name="Nucleic Acids Res.">
        <title>Evolutionary variation of the CCAAT-binding transcription factor NF-Y.</title>
        <authorList>
            <person name="Li X.-Y."/>
            <person name="Mantovani R."/>
            <person name="Hooft van Huijsduijnen R."/>
            <person name="Andre I."/>
            <person name="Benoist C."/>
            <person name="Mathis D."/>
        </authorList>
    </citation>
    <scope>NUCLEOTIDE SEQUENCE [MRNA]</scope>
</reference>
<name>NFYB_MAIZE</name>
<protein>
    <recommendedName>
        <fullName>Nuclear transcription factor Y subunit B</fullName>
        <shortName>NF-YB</shortName>
    </recommendedName>
    <alternativeName>
        <fullName>CAAT box DNA-binding protein subunit B</fullName>
    </alternativeName>
</protein>
<proteinExistence type="evidence at transcript level"/>
<keyword id="KW-0010">Activator</keyword>
<keyword id="KW-0238">DNA-binding</keyword>
<keyword id="KW-0539">Nucleus</keyword>
<keyword id="KW-1185">Reference proteome</keyword>
<keyword id="KW-0804">Transcription</keyword>
<keyword id="KW-0805">Transcription regulation</keyword>
<gene>
    <name type="primary">NFY2</name>
</gene>
<comment type="function">
    <text>Component of the NF-Y/HAP transcription factor complex. The NF-Y complex stimulates the transcription of various genes by recognizing and binding to a CCAAT motif in promoters.</text>
</comment>
<comment type="subunit">
    <text evidence="1">Heterotrimeric transcription factor composed of three components, NF-YA, NF-YB and NF-YC. NF-YB and NF-YC must interact and dimerize for NF-YA association and DNA binding (By similarity).</text>
</comment>
<comment type="subcellular location">
    <subcellularLocation>
        <location>Nucleus</location>
    </subcellularLocation>
</comment>
<comment type="similarity">
    <text evidence="3">Belongs to the NFYB/HAP3 subunit family.</text>
</comment>
<dbReference type="EMBL" id="X59714">
    <property type="protein sequence ID" value="CAA42234.1"/>
    <property type="molecule type" value="mRNA"/>
</dbReference>
<dbReference type="PIR" id="S22820">
    <property type="entry name" value="S22820"/>
</dbReference>
<dbReference type="SMR" id="P25209"/>
<dbReference type="FunCoup" id="P25209">
    <property type="interactions" value="1567"/>
</dbReference>
<dbReference type="STRING" id="4577.P25209"/>
<dbReference type="PaxDb" id="4577-GRMZM5G804893_P02"/>
<dbReference type="MaizeGDB" id="69282"/>
<dbReference type="eggNOG" id="KOG0869">
    <property type="taxonomic scope" value="Eukaryota"/>
</dbReference>
<dbReference type="InParanoid" id="P25209"/>
<dbReference type="Proteomes" id="UP000007305">
    <property type="component" value="Unplaced"/>
</dbReference>
<dbReference type="ExpressionAtlas" id="P25209">
    <property type="expression patterns" value="baseline and differential"/>
</dbReference>
<dbReference type="GO" id="GO:0016602">
    <property type="term" value="C:CCAAT-binding factor complex"/>
    <property type="evidence" value="ECO:0000318"/>
    <property type="project" value="GO_Central"/>
</dbReference>
<dbReference type="GO" id="GO:0001228">
    <property type="term" value="F:DNA-binding transcription activator activity, RNA polymerase II-specific"/>
    <property type="evidence" value="ECO:0007669"/>
    <property type="project" value="InterPro"/>
</dbReference>
<dbReference type="GO" id="GO:0000981">
    <property type="term" value="F:DNA-binding transcription factor activity, RNA polymerase II-specific"/>
    <property type="evidence" value="ECO:0000318"/>
    <property type="project" value="GO_Central"/>
</dbReference>
<dbReference type="GO" id="GO:0046982">
    <property type="term" value="F:protein heterodimerization activity"/>
    <property type="evidence" value="ECO:0007669"/>
    <property type="project" value="InterPro"/>
</dbReference>
<dbReference type="GO" id="GO:0043565">
    <property type="term" value="F:sequence-specific DNA binding"/>
    <property type="evidence" value="ECO:0007669"/>
    <property type="project" value="InterPro"/>
</dbReference>
<dbReference type="GO" id="GO:0006357">
    <property type="term" value="P:regulation of transcription by RNA polymerase II"/>
    <property type="evidence" value="ECO:0000318"/>
    <property type="project" value="GO_Central"/>
</dbReference>
<dbReference type="CDD" id="cd22907">
    <property type="entry name" value="HFD_NFYB"/>
    <property type="match status" value="1"/>
</dbReference>
<dbReference type="FunFam" id="1.10.20.10:FF:000035">
    <property type="entry name" value="Nuclear transcription factor Y subunit B-3"/>
    <property type="match status" value="1"/>
</dbReference>
<dbReference type="Gene3D" id="1.10.20.10">
    <property type="entry name" value="Histone, subunit A"/>
    <property type="match status" value="1"/>
</dbReference>
<dbReference type="InterPro" id="IPR003958">
    <property type="entry name" value="CBFA_NFYB_domain"/>
</dbReference>
<dbReference type="InterPro" id="IPR009072">
    <property type="entry name" value="Histone-fold"/>
</dbReference>
<dbReference type="InterPro" id="IPR027113">
    <property type="entry name" value="Transc_fact_NFYB/HAP3"/>
</dbReference>
<dbReference type="InterPro" id="IPR003956">
    <property type="entry name" value="Transcrpt_fac_NFYB/HAP3_CS"/>
</dbReference>
<dbReference type="PANTHER" id="PTHR11064">
    <property type="entry name" value="CCAAT-BINDING TRANSCRIPTION FACTOR-RELATED"/>
    <property type="match status" value="1"/>
</dbReference>
<dbReference type="PANTHER" id="PTHR11064:SF193">
    <property type="entry name" value="NUCLEAR TRANSCRIPTION FACTOR Y SUBUNIT B-3"/>
    <property type="match status" value="1"/>
</dbReference>
<dbReference type="Pfam" id="PF00808">
    <property type="entry name" value="CBFD_NFYB_HMF"/>
    <property type="match status" value="1"/>
</dbReference>
<dbReference type="PRINTS" id="PR00615">
    <property type="entry name" value="CCAATSUBUNTA"/>
</dbReference>
<dbReference type="SUPFAM" id="SSF47113">
    <property type="entry name" value="Histone-fold"/>
    <property type="match status" value="1"/>
</dbReference>
<dbReference type="PROSITE" id="PS00685">
    <property type="entry name" value="NFYB_HAP3"/>
    <property type="match status" value="1"/>
</dbReference>